<organism>
    <name type="scientific">Citrifermentans bemidjiense (strain ATCC BAA-1014 / DSM 16622 / JCM 12645 / Bem)</name>
    <name type="common">Geobacter bemidjiensis</name>
    <dbReference type="NCBI Taxonomy" id="404380"/>
    <lineage>
        <taxon>Bacteria</taxon>
        <taxon>Pseudomonadati</taxon>
        <taxon>Thermodesulfobacteriota</taxon>
        <taxon>Desulfuromonadia</taxon>
        <taxon>Geobacterales</taxon>
        <taxon>Geobacteraceae</taxon>
        <taxon>Citrifermentans</taxon>
    </lineage>
</organism>
<gene>
    <name evidence="1" type="primary">hisG</name>
    <name type="ordered locus">Gbem_3706</name>
</gene>
<keyword id="KW-0028">Amino-acid biosynthesis</keyword>
<keyword id="KW-0067">ATP-binding</keyword>
<keyword id="KW-0963">Cytoplasm</keyword>
<keyword id="KW-0328">Glycosyltransferase</keyword>
<keyword id="KW-0368">Histidine biosynthesis</keyword>
<keyword id="KW-0547">Nucleotide-binding</keyword>
<keyword id="KW-1185">Reference proteome</keyword>
<keyword id="KW-0808">Transferase</keyword>
<feature type="chain" id="PRO_1000135281" description="ATP phosphoribosyltransferase">
    <location>
        <begin position="1"/>
        <end position="212"/>
    </location>
</feature>
<sequence length="212" mass="23914">MPDFITIAIPKGRILQDSVALFKKIGIDCEELLSDTRKLVFENQEQKMRYMIVRATDVPTYVEYGCADLGIVGKDTLMEAEKDLYEPLDLKFGYCRLMVAEPVELSSKDDPSAWNNIRIATKYPNVTEKYFAAKGIQVELIKLYGSIELAPLVGLSERIVDLVSTGETLKQNGLAEIETIAEITCRLIVNRASMKTKHERISKIIEGLEQHI</sequence>
<accession>B5EDS0</accession>
<reference key="1">
    <citation type="submission" date="2008-07" db="EMBL/GenBank/DDBJ databases">
        <title>Complete sequence of Geobacter bemidjiensis BEM.</title>
        <authorList>
            <consortium name="US DOE Joint Genome Institute"/>
            <person name="Lucas S."/>
            <person name="Copeland A."/>
            <person name="Lapidus A."/>
            <person name="Glavina del Rio T."/>
            <person name="Dalin E."/>
            <person name="Tice H."/>
            <person name="Bruce D."/>
            <person name="Goodwin L."/>
            <person name="Pitluck S."/>
            <person name="Kiss H."/>
            <person name="Brettin T."/>
            <person name="Detter J.C."/>
            <person name="Han C."/>
            <person name="Kuske C.R."/>
            <person name="Schmutz J."/>
            <person name="Larimer F."/>
            <person name="Land M."/>
            <person name="Hauser L."/>
            <person name="Kyrpides N."/>
            <person name="Lykidis A."/>
            <person name="Lovley D."/>
            <person name="Richardson P."/>
        </authorList>
    </citation>
    <scope>NUCLEOTIDE SEQUENCE [LARGE SCALE GENOMIC DNA]</scope>
    <source>
        <strain>ATCC BAA-1014 / DSM 16622 / JCM 12645 / Bem</strain>
    </source>
</reference>
<comment type="function">
    <text evidence="1">Catalyzes the condensation of ATP and 5-phosphoribose 1-diphosphate to form N'-(5'-phosphoribosyl)-ATP (PR-ATP). Has a crucial role in the pathway because the rate of histidine biosynthesis seems to be controlled primarily by regulation of HisG enzymatic activity.</text>
</comment>
<comment type="catalytic activity">
    <reaction evidence="1">
        <text>1-(5-phospho-beta-D-ribosyl)-ATP + diphosphate = 5-phospho-alpha-D-ribose 1-diphosphate + ATP</text>
        <dbReference type="Rhea" id="RHEA:18473"/>
        <dbReference type="ChEBI" id="CHEBI:30616"/>
        <dbReference type="ChEBI" id="CHEBI:33019"/>
        <dbReference type="ChEBI" id="CHEBI:58017"/>
        <dbReference type="ChEBI" id="CHEBI:73183"/>
        <dbReference type="EC" id="2.4.2.17"/>
    </reaction>
</comment>
<comment type="pathway">
    <text evidence="1">Amino-acid biosynthesis; L-histidine biosynthesis; L-histidine from 5-phospho-alpha-D-ribose 1-diphosphate: step 1/9.</text>
</comment>
<comment type="subunit">
    <text evidence="1">Heteromultimer composed of HisG and HisZ subunits.</text>
</comment>
<comment type="subcellular location">
    <subcellularLocation>
        <location evidence="1">Cytoplasm</location>
    </subcellularLocation>
</comment>
<comment type="domain">
    <text>Lacks the C-terminal regulatory region which is replaced by HisZ.</text>
</comment>
<comment type="similarity">
    <text evidence="1">Belongs to the ATP phosphoribosyltransferase family. Short subfamily.</text>
</comment>
<protein>
    <recommendedName>
        <fullName evidence="1">ATP phosphoribosyltransferase</fullName>
        <shortName evidence="1">ATP-PRT</shortName>
        <shortName evidence="1">ATP-PRTase</shortName>
        <ecNumber evidence="1">2.4.2.17</ecNumber>
    </recommendedName>
</protein>
<dbReference type="EC" id="2.4.2.17" evidence="1"/>
<dbReference type="EMBL" id="CP001124">
    <property type="protein sequence ID" value="ACH40698.1"/>
    <property type="molecule type" value="Genomic_DNA"/>
</dbReference>
<dbReference type="RefSeq" id="WP_012532135.1">
    <property type="nucleotide sequence ID" value="NC_011146.1"/>
</dbReference>
<dbReference type="SMR" id="B5EDS0"/>
<dbReference type="STRING" id="404380.Gbem_3706"/>
<dbReference type="KEGG" id="gbm:Gbem_3706"/>
<dbReference type="eggNOG" id="COG0040">
    <property type="taxonomic scope" value="Bacteria"/>
</dbReference>
<dbReference type="HOGENOM" id="CLU_038115_2_0_7"/>
<dbReference type="OrthoDB" id="9801867at2"/>
<dbReference type="UniPathway" id="UPA00031">
    <property type="reaction ID" value="UER00006"/>
</dbReference>
<dbReference type="Proteomes" id="UP000008825">
    <property type="component" value="Chromosome"/>
</dbReference>
<dbReference type="GO" id="GO:0005737">
    <property type="term" value="C:cytoplasm"/>
    <property type="evidence" value="ECO:0007669"/>
    <property type="project" value="UniProtKB-SubCell"/>
</dbReference>
<dbReference type="GO" id="GO:0005524">
    <property type="term" value="F:ATP binding"/>
    <property type="evidence" value="ECO:0007669"/>
    <property type="project" value="UniProtKB-KW"/>
</dbReference>
<dbReference type="GO" id="GO:0003879">
    <property type="term" value="F:ATP phosphoribosyltransferase activity"/>
    <property type="evidence" value="ECO:0007669"/>
    <property type="project" value="UniProtKB-UniRule"/>
</dbReference>
<dbReference type="GO" id="GO:0000105">
    <property type="term" value="P:L-histidine biosynthetic process"/>
    <property type="evidence" value="ECO:0007669"/>
    <property type="project" value="UniProtKB-UniRule"/>
</dbReference>
<dbReference type="CDD" id="cd13595">
    <property type="entry name" value="PBP2_HisGs"/>
    <property type="match status" value="1"/>
</dbReference>
<dbReference type="FunFam" id="3.40.190.10:FF:000011">
    <property type="entry name" value="ATP phosphoribosyltransferase"/>
    <property type="match status" value="1"/>
</dbReference>
<dbReference type="Gene3D" id="3.40.190.10">
    <property type="entry name" value="Periplasmic binding protein-like II"/>
    <property type="match status" value="2"/>
</dbReference>
<dbReference type="HAMAP" id="MF_01018">
    <property type="entry name" value="HisG_Short"/>
    <property type="match status" value="1"/>
</dbReference>
<dbReference type="InterPro" id="IPR013820">
    <property type="entry name" value="ATP_PRibTrfase_cat"/>
</dbReference>
<dbReference type="InterPro" id="IPR018198">
    <property type="entry name" value="ATP_PRibTrfase_CS"/>
</dbReference>
<dbReference type="InterPro" id="IPR001348">
    <property type="entry name" value="ATP_PRibTrfase_HisG"/>
</dbReference>
<dbReference type="InterPro" id="IPR024893">
    <property type="entry name" value="ATP_PRibTrfase_HisG_short"/>
</dbReference>
<dbReference type="NCBIfam" id="TIGR00070">
    <property type="entry name" value="hisG"/>
    <property type="match status" value="1"/>
</dbReference>
<dbReference type="PANTHER" id="PTHR21403:SF8">
    <property type="entry name" value="ATP PHOSPHORIBOSYLTRANSFERASE"/>
    <property type="match status" value="1"/>
</dbReference>
<dbReference type="PANTHER" id="PTHR21403">
    <property type="entry name" value="ATP PHOSPHORIBOSYLTRANSFERASE ATP-PRTASE"/>
    <property type="match status" value="1"/>
</dbReference>
<dbReference type="Pfam" id="PF01634">
    <property type="entry name" value="HisG"/>
    <property type="match status" value="1"/>
</dbReference>
<dbReference type="SUPFAM" id="SSF53850">
    <property type="entry name" value="Periplasmic binding protein-like II"/>
    <property type="match status" value="1"/>
</dbReference>
<dbReference type="PROSITE" id="PS01316">
    <property type="entry name" value="ATP_P_PHORIBOSYLTR"/>
    <property type="match status" value="1"/>
</dbReference>
<proteinExistence type="inferred from homology"/>
<evidence type="ECO:0000255" key="1">
    <source>
        <dbReference type="HAMAP-Rule" id="MF_01018"/>
    </source>
</evidence>
<name>HIS1_CITBB</name>